<name>CTAA_BARQU</name>
<gene>
    <name evidence="1" type="primary">ctaA</name>
    <name type="ordered locus">BQ05370</name>
</gene>
<dbReference type="EC" id="1.17.99.9" evidence="1"/>
<dbReference type="EMBL" id="BX897700">
    <property type="protein sequence ID" value="CAF26032.1"/>
    <property type="molecule type" value="Genomic_DNA"/>
</dbReference>
<dbReference type="RefSeq" id="WP_011179306.1">
    <property type="nucleotide sequence ID" value="NC_005955.1"/>
</dbReference>
<dbReference type="SMR" id="Q6G011"/>
<dbReference type="KEGG" id="bqu:BQ05370"/>
<dbReference type="eggNOG" id="COG1612">
    <property type="taxonomic scope" value="Bacteria"/>
</dbReference>
<dbReference type="HOGENOM" id="CLU_017627_0_0_5"/>
<dbReference type="UniPathway" id="UPA00269">
    <property type="reaction ID" value="UER00713"/>
</dbReference>
<dbReference type="Proteomes" id="UP000000597">
    <property type="component" value="Chromosome"/>
</dbReference>
<dbReference type="GO" id="GO:0005886">
    <property type="term" value="C:plasma membrane"/>
    <property type="evidence" value="ECO:0007669"/>
    <property type="project" value="UniProtKB-SubCell"/>
</dbReference>
<dbReference type="GO" id="GO:0046872">
    <property type="term" value="F:metal ion binding"/>
    <property type="evidence" value="ECO:0007669"/>
    <property type="project" value="UniProtKB-KW"/>
</dbReference>
<dbReference type="GO" id="GO:0016653">
    <property type="term" value="F:oxidoreductase activity, acting on NAD(P)H, heme protein as acceptor"/>
    <property type="evidence" value="ECO:0007669"/>
    <property type="project" value="InterPro"/>
</dbReference>
<dbReference type="GO" id="GO:0006784">
    <property type="term" value="P:heme A biosynthetic process"/>
    <property type="evidence" value="ECO:0007669"/>
    <property type="project" value="UniProtKB-UniRule"/>
</dbReference>
<dbReference type="HAMAP" id="MF_01665">
    <property type="entry name" value="HemeA_synth_type2"/>
    <property type="match status" value="1"/>
</dbReference>
<dbReference type="InterPro" id="IPR003780">
    <property type="entry name" value="COX15/CtaA_fam"/>
</dbReference>
<dbReference type="InterPro" id="IPR023754">
    <property type="entry name" value="HemeA_Synthase_type2"/>
</dbReference>
<dbReference type="PANTHER" id="PTHR23289">
    <property type="entry name" value="CYTOCHROME C OXIDASE ASSEMBLY PROTEIN COX15"/>
    <property type="match status" value="1"/>
</dbReference>
<dbReference type="PANTHER" id="PTHR23289:SF2">
    <property type="entry name" value="CYTOCHROME C OXIDASE ASSEMBLY PROTEIN COX15 HOMOLOG"/>
    <property type="match status" value="1"/>
</dbReference>
<dbReference type="Pfam" id="PF02628">
    <property type="entry name" value="COX15-CtaA"/>
    <property type="match status" value="1"/>
</dbReference>
<feature type="chain" id="PRO_0000349014" description="Heme A synthase">
    <location>
        <begin position="1"/>
        <end position="358"/>
    </location>
</feature>
<feature type="transmembrane region" description="Helical" evidence="1">
    <location>
        <begin position="22"/>
        <end position="42"/>
    </location>
</feature>
<feature type="transmembrane region" description="Helical" evidence="1">
    <location>
        <begin position="107"/>
        <end position="127"/>
    </location>
</feature>
<feature type="transmembrane region" description="Helical" evidence="1">
    <location>
        <begin position="139"/>
        <end position="159"/>
    </location>
</feature>
<feature type="transmembrane region" description="Helical" evidence="1">
    <location>
        <begin position="173"/>
        <end position="193"/>
    </location>
</feature>
<feature type="transmembrane region" description="Helical" evidence="1">
    <location>
        <begin position="208"/>
        <end position="228"/>
    </location>
</feature>
<feature type="transmembrane region" description="Helical" evidence="1">
    <location>
        <begin position="269"/>
        <end position="289"/>
    </location>
</feature>
<feature type="transmembrane region" description="Helical" evidence="1">
    <location>
        <begin position="302"/>
        <end position="322"/>
    </location>
</feature>
<feature type="transmembrane region" description="Helical" evidence="1">
    <location>
        <begin position="324"/>
        <end position="344"/>
    </location>
</feature>
<feature type="binding site" description="axial binding residue" evidence="1">
    <location>
        <position position="271"/>
    </location>
    <ligand>
        <name>heme</name>
        <dbReference type="ChEBI" id="CHEBI:30413"/>
    </ligand>
    <ligandPart>
        <name>Fe</name>
        <dbReference type="ChEBI" id="CHEBI:18248"/>
    </ligandPart>
</feature>
<feature type="binding site" description="axial binding residue" evidence="1">
    <location>
        <position position="332"/>
    </location>
    <ligand>
        <name>heme</name>
        <dbReference type="ChEBI" id="CHEBI:30413"/>
    </ligand>
    <ligandPart>
        <name>Fe</name>
        <dbReference type="ChEBI" id="CHEBI:18248"/>
    </ligandPart>
</feature>
<accession>Q6G011</accession>
<evidence type="ECO:0000255" key="1">
    <source>
        <dbReference type="HAMAP-Rule" id="MF_01665"/>
    </source>
</evidence>
<reference key="1">
    <citation type="journal article" date="2004" name="Proc. Natl. Acad. Sci. U.S.A.">
        <title>The louse-borne human pathogen Bartonella quintana is a genomic derivative of the zoonotic agent Bartonella henselae.</title>
        <authorList>
            <person name="Alsmark U.C.M."/>
            <person name="Frank A.C."/>
            <person name="Karlberg E.O."/>
            <person name="Legault B.-A."/>
            <person name="Ardell D.H."/>
            <person name="Canbaeck B."/>
            <person name="Eriksson A.-S."/>
            <person name="Naeslund A.K."/>
            <person name="Handley S.A."/>
            <person name="Huvet M."/>
            <person name="La Scola B."/>
            <person name="Holmberg M."/>
            <person name="Andersson S.G.E."/>
        </authorList>
    </citation>
    <scope>NUCLEOTIDE SEQUENCE [LARGE SCALE GENOMIC DNA]</scope>
    <source>
        <strain>Toulouse</strain>
    </source>
</reference>
<proteinExistence type="inferred from homology"/>
<organism>
    <name type="scientific">Bartonella quintana (strain Toulouse)</name>
    <name type="common">Rochalimaea quintana</name>
    <dbReference type="NCBI Taxonomy" id="283165"/>
    <lineage>
        <taxon>Bacteria</taxon>
        <taxon>Pseudomonadati</taxon>
        <taxon>Pseudomonadota</taxon>
        <taxon>Alphaproteobacteria</taxon>
        <taxon>Hyphomicrobiales</taxon>
        <taxon>Bartonellaceae</taxon>
        <taxon>Bartonella</taxon>
    </lineage>
</organism>
<comment type="function">
    <text evidence="1">Catalyzes the conversion of heme O to heme A by two successive hydroxylations of the methyl group at C8. The first hydroxylation forms heme I, the second hydroxylation results in an unstable dihydroxymethyl group, which spontaneously dehydrates, resulting in the formyl group of heme A.</text>
</comment>
<comment type="catalytic activity">
    <reaction evidence="1">
        <text>Fe(II)-heme o + 2 A + H2O = Fe(II)-heme a + 2 AH2</text>
        <dbReference type="Rhea" id="RHEA:63388"/>
        <dbReference type="ChEBI" id="CHEBI:13193"/>
        <dbReference type="ChEBI" id="CHEBI:15377"/>
        <dbReference type="ChEBI" id="CHEBI:17499"/>
        <dbReference type="ChEBI" id="CHEBI:60530"/>
        <dbReference type="ChEBI" id="CHEBI:61715"/>
        <dbReference type="EC" id="1.17.99.9"/>
    </reaction>
    <physiologicalReaction direction="left-to-right" evidence="1">
        <dbReference type="Rhea" id="RHEA:63389"/>
    </physiologicalReaction>
</comment>
<comment type="cofactor">
    <cofactor evidence="1">
        <name>heme b</name>
        <dbReference type="ChEBI" id="CHEBI:60344"/>
    </cofactor>
</comment>
<comment type="pathway">
    <text evidence="1">Porphyrin-containing compound metabolism; heme A biosynthesis; heme A from heme O: step 1/1.</text>
</comment>
<comment type="subunit">
    <text evidence="1">Interacts with CtaB.</text>
</comment>
<comment type="subcellular location">
    <subcellularLocation>
        <location evidence="1">Cell membrane</location>
        <topology evidence="1">Multi-pass membrane protein</topology>
    </subcellularLocation>
</comment>
<comment type="similarity">
    <text evidence="1">Belongs to the COX15/CtaA family. Type 2 subfamily.</text>
</comment>
<protein>
    <recommendedName>
        <fullName evidence="1">Heme A synthase</fullName>
        <shortName evidence="1">HAS</shortName>
        <ecNumber evidence="1">1.17.99.9</ecNumber>
    </recommendedName>
    <alternativeName>
        <fullName evidence="1">Cytochrome aa3-controlling protein</fullName>
    </alternativeName>
</protein>
<keyword id="KW-1003">Cell membrane</keyword>
<keyword id="KW-0350">Heme biosynthesis</keyword>
<keyword id="KW-0408">Iron</keyword>
<keyword id="KW-0472">Membrane</keyword>
<keyword id="KW-0479">Metal-binding</keyword>
<keyword id="KW-0560">Oxidoreductase</keyword>
<keyword id="KW-0812">Transmembrane</keyword>
<keyword id="KW-1133">Transmembrane helix</keyword>
<sequence length="358" mass="41100">MAEKILNNDVLTSLQKKNRKQIQVWLYSILLLCLAIVLVGGATRLTGSGLSITDWRPIHGVIPPIGAEQWQEEFLKYQQIAQYKLLNRDMTLNAFKVIFWWEWAHRILGRLVGLLALLGLIWFWATKRIEKNILLKLTIVPILIAFQGAIGWWMVASGIGQSNLTSVSQYRLAFHLITACFIITFVTYLSRGFTEYSEKPANQRVQRFAGWLVVLILIEIYFGALVAGLHAGKVYNTWPLMDGQFIPDGLMQHNPVWLNLFENPLTIQFIHRFFAYFLFFVTIIHAFYVQKNIPHSTHSRRAFFICVMIVVQAFLGIITLLREVPIGLGLIHQSVALAILCFSVVHWRATKEAYRAVE</sequence>